<organism>
    <name type="scientific">Chlamydia muridarum (strain MoPn / Nigg)</name>
    <dbReference type="NCBI Taxonomy" id="243161"/>
    <lineage>
        <taxon>Bacteria</taxon>
        <taxon>Pseudomonadati</taxon>
        <taxon>Chlamydiota</taxon>
        <taxon>Chlamydiia</taxon>
        <taxon>Chlamydiales</taxon>
        <taxon>Chlamydiaceae</taxon>
        <taxon>Chlamydia/Chlamydophila group</taxon>
        <taxon>Chlamydia</taxon>
    </lineage>
</organism>
<evidence type="ECO:0000255" key="1">
    <source>
        <dbReference type="HAMAP-Rule" id="MF_00376"/>
    </source>
</evidence>
<evidence type="ECO:0000305" key="2"/>
<protein>
    <recommendedName>
        <fullName evidence="1">Dephospho-CoA kinase</fullName>
        <ecNumber evidence="1">2.7.1.24</ecNumber>
    </recommendedName>
    <alternativeName>
        <fullName evidence="1">Dephosphocoenzyme A kinase</fullName>
    </alternativeName>
</protein>
<gene>
    <name evidence="1" type="primary">coaE</name>
    <name type="ordered locus">TC_0779</name>
</gene>
<reference key="1">
    <citation type="journal article" date="2000" name="Nucleic Acids Res.">
        <title>Genome sequences of Chlamydia trachomatis MoPn and Chlamydia pneumoniae AR39.</title>
        <authorList>
            <person name="Read T.D."/>
            <person name="Brunham R.C."/>
            <person name="Shen C."/>
            <person name="Gill S.R."/>
            <person name="Heidelberg J.F."/>
            <person name="White O."/>
            <person name="Hickey E.K."/>
            <person name="Peterson J.D."/>
            <person name="Utterback T.R."/>
            <person name="Berry K.J."/>
            <person name="Bass S."/>
            <person name="Linher K.D."/>
            <person name="Weidman J.F."/>
            <person name="Khouri H.M."/>
            <person name="Craven B."/>
            <person name="Bowman C."/>
            <person name="Dodson R.J."/>
            <person name="Gwinn M.L."/>
            <person name="Nelson W.C."/>
            <person name="DeBoy R.T."/>
            <person name="Kolonay J.F."/>
            <person name="McClarty G."/>
            <person name="Salzberg S.L."/>
            <person name="Eisen J.A."/>
            <person name="Fraser C.M."/>
        </authorList>
    </citation>
    <scope>NUCLEOTIDE SEQUENCE [LARGE SCALE GENOMIC DNA]</scope>
    <source>
        <strain>MoPn / Nigg</strain>
    </source>
</reference>
<accession>Q9PJP9</accession>
<feature type="chain" id="PRO_0000172925" description="Dephospho-CoA kinase">
    <location>
        <begin position="1"/>
        <end position="202"/>
    </location>
</feature>
<feature type="domain" description="DPCK" evidence="1">
    <location>
        <begin position="6"/>
        <end position="202"/>
    </location>
</feature>
<feature type="binding site" evidence="1">
    <location>
        <begin position="14"/>
        <end position="19"/>
    </location>
    <ligand>
        <name>ATP</name>
        <dbReference type="ChEBI" id="CHEBI:30616"/>
    </ligand>
</feature>
<name>COAE_CHLMU</name>
<dbReference type="EC" id="2.7.1.24" evidence="1"/>
<dbReference type="EMBL" id="AE002160">
    <property type="protein sequence ID" value="AAF39582.1"/>
    <property type="status" value="ALT_INIT"/>
    <property type="molecule type" value="Genomic_DNA"/>
</dbReference>
<dbReference type="PIR" id="C81665">
    <property type="entry name" value="C81665"/>
</dbReference>
<dbReference type="RefSeq" id="WP_010231509.1">
    <property type="nucleotide sequence ID" value="NZ_CP063055.1"/>
</dbReference>
<dbReference type="SMR" id="Q9PJP9"/>
<dbReference type="GeneID" id="1246144"/>
<dbReference type="KEGG" id="cmu:TC_0779"/>
<dbReference type="eggNOG" id="COG0237">
    <property type="taxonomic scope" value="Bacteria"/>
</dbReference>
<dbReference type="HOGENOM" id="CLU_057180_3_1_0"/>
<dbReference type="OrthoDB" id="17745at2"/>
<dbReference type="UniPathway" id="UPA00241">
    <property type="reaction ID" value="UER00356"/>
</dbReference>
<dbReference type="Proteomes" id="UP000000800">
    <property type="component" value="Chromosome"/>
</dbReference>
<dbReference type="GO" id="GO:0005737">
    <property type="term" value="C:cytoplasm"/>
    <property type="evidence" value="ECO:0007669"/>
    <property type="project" value="UniProtKB-SubCell"/>
</dbReference>
<dbReference type="GO" id="GO:0005524">
    <property type="term" value="F:ATP binding"/>
    <property type="evidence" value="ECO:0007669"/>
    <property type="project" value="UniProtKB-UniRule"/>
</dbReference>
<dbReference type="GO" id="GO:0004140">
    <property type="term" value="F:dephospho-CoA kinase activity"/>
    <property type="evidence" value="ECO:0007669"/>
    <property type="project" value="UniProtKB-UniRule"/>
</dbReference>
<dbReference type="GO" id="GO:0015937">
    <property type="term" value="P:coenzyme A biosynthetic process"/>
    <property type="evidence" value="ECO:0007669"/>
    <property type="project" value="UniProtKB-UniRule"/>
</dbReference>
<dbReference type="CDD" id="cd02022">
    <property type="entry name" value="DPCK"/>
    <property type="match status" value="1"/>
</dbReference>
<dbReference type="Gene3D" id="3.40.50.300">
    <property type="entry name" value="P-loop containing nucleotide triphosphate hydrolases"/>
    <property type="match status" value="1"/>
</dbReference>
<dbReference type="HAMAP" id="MF_00376">
    <property type="entry name" value="Dephospho_CoA_kinase"/>
    <property type="match status" value="1"/>
</dbReference>
<dbReference type="InterPro" id="IPR001977">
    <property type="entry name" value="Depp_CoAkinase"/>
</dbReference>
<dbReference type="InterPro" id="IPR027417">
    <property type="entry name" value="P-loop_NTPase"/>
</dbReference>
<dbReference type="NCBIfam" id="TIGR00152">
    <property type="entry name" value="dephospho-CoA kinase"/>
    <property type="match status" value="1"/>
</dbReference>
<dbReference type="PANTHER" id="PTHR10695:SF46">
    <property type="entry name" value="BIFUNCTIONAL COENZYME A SYNTHASE-RELATED"/>
    <property type="match status" value="1"/>
</dbReference>
<dbReference type="PANTHER" id="PTHR10695">
    <property type="entry name" value="DEPHOSPHO-COA KINASE-RELATED"/>
    <property type="match status" value="1"/>
</dbReference>
<dbReference type="Pfam" id="PF01121">
    <property type="entry name" value="CoaE"/>
    <property type="match status" value="1"/>
</dbReference>
<dbReference type="SUPFAM" id="SSF52540">
    <property type="entry name" value="P-loop containing nucleoside triphosphate hydrolases"/>
    <property type="match status" value="1"/>
</dbReference>
<dbReference type="PROSITE" id="PS51219">
    <property type="entry name" value="DPCK"/>
    <property type="match status" value="1"/>
</dbReference>
<proteinExistence type="inferred from homology"/>
<comment type="function">
    <text evidence="1">Catalyzes the phosphorylation of the 3'-hydroxyl group of dephosphocoenzyme A to form coenzyme A.</text>
</comment>
<comment type="catalytic activity">
    <reaction evidence="1">
        <text>3'-dephospho-CoA + ATP = ADP + CoA + H(+)</text>
        <dbReference type="Rhea" id="RHEA:18245"/>
        <dbReference type="ChEBI" id="CHEBI:15378"/>
        <dbReference type="ChEBI" id="CHEBI:30616"/>
        <dbReference type="ChEBI" id="CHEBI:57287"/>
        <dbReference type="ChEBI" id="CHEBI:57328"/>
        <dbReference type="ChEBI" id="CHEBI:456216"/>
        <dbReference type="EC" id="2.7.1.24"/>
    </reaction>
</comment>
<comment type="pathway">
    <text evidence="1">Cofactor biosynthesis; coenzyme A biosynthesis; CoA from (R)-pantothenate: step 5/5.</text>
</comment>
<comment type="subcellular location">
    <subcellularLocation>
        <location evidence="1">Cytoplasm</location>
    </subcellularLocation>
</comment>
<comment type="similarity">
    <text evidence="1 2">Belongs to the CoaE family.</text>
</comment>
<comment type="sequence caution" evidence="2">
    <conflict type="erroneous initiation">
        <sequence resource="EMBL-CDS" id="AAF39582"/>
    </conflict>
</comment>
<sequence length="202" mass="22878">MLDLLKISVTGDPSSGKTEACQVFEELGAFVISADKVSHSFLVPYTSEGQRVVDLLGPEIIVENTLNRKAIAKKVFGNRDLLLSLEKILHPGVCRFVEENYTQVVQAQKYSLFVVEVPLLYEIQYADWFDRVILISADTEIRKERFLKKTGGSDTSFDLRCARFSSLEEKILRADVVIENNGTKEEFRHKVKQCFKALKGTI</sequence>
<keyword id="KW-0067">ATP-binding</keyword>
<keyword id="KW-0173">Coenzyme A biosynthesis</keyword>
<keyword id="KW-0963">Cytoplasm</keyword>
<keyword id="KW-0418">Kinase</keyword>
<keyword id="KW-0547">Nucleotide-binding</keyword>
<keyword id="KW-0808">Transferase</keyword>